<proteinExistence type="inferred from homology"/>
<evidence type="ECO:0000255" key="1">
    <source>
        <dbReference type="HAMAP-Rule" id="MF_00469"/>
    </source>
</evidence>
<evidence type="ECO:0000305" key="2"/>
<reference key="1">
    <citation type="journal article" date="2000" name="Nature">
        <title>DNA sequence of both chromosomes of the cholera pathogen Vibrio cholerae.</title>
        <authorList>
            <person name="Heidelberg J.F."/>
            <person name="Eisen J.A."/>
            <person name="Nelson W.C."/>
            <person name="Clayton R.A."/>
            <person name="Gwinn M.L."/>
            <person name="Dodson R.J."/>
            <person name="Haft D.H."/>
            <person name="Hickey E.K."/>
            <person name="Peterson J.D."/>
            <person name="Umayam L.A."/>
            <person name="Gill S.R."/>
            <person name="Nelson K.E."/>
            <person name="Read T.D."/>
            <person name="Tettelin H."/>
            <person name="Richardson D.L."/>
            <person name="Ermolaeva M.D."/>
            <person name="Vamathevan J.J."/>
            <person name="Bass S."/>
            <person name="Qin H."/>
            <person name="Dragoi I."/>
            <person name="Sellers P."/>
            <person name="McDonald L.A."/>
            <person name="Utterback T.R."/>
            <person name="Fleischmann R.D."/>
            <person name="Nierman W.C."/>
            <person name="White O."/>
            <person name="Salzberg S.L."/>
            <person name="Smith H.O."/>
            <person name="Colwell R.R."/>
            <person name="Mekalanos J.J."/>
            <person name="Venter J.C."/>
            <person name="Fraser C.M."/>
        </authorList>
    </citation>
    <scope>NUCLEOTIDE SEQUENCE [LARGE SCALE GENOMIC DNA]</scope>
    <source>
        <strain>ATCC 39315 / El Tor Inaba N16961</strain>
    </source>
</reference>
<sequence length="327" mass="37167">MSQYVVCALYKFVELNHYQELRAPLLALMEENHIRGTLLLAQEGINGTVASSRQGIDALLAWLENEPSLKGTVYKESSASEPPFNRTKVKLKKEIVTMGVEGIDPRHVVGTYVKPQDWNALISDPEVLVVDTRNDYEVQLGTFKNALNPKTETFREFPHYVQENLDPQKHKKVAMFCTGGIRCEKSTAYLKEQGFEEVYHLEGGILKYLEEVPQEQSLWEGDCYVFDGRVAVGHGLAESDYQICNACRLPITEEDKQSEQYEQGVSCPRCFGTHSEEQLERFREREKQVQLAKLRGESHIGEESAALIEKRRAEKLARKAAQRGQKG</sequence>
<feature type="chain" id="PRO_0000161534" description="tRNA uridine(34) hydroxylase">
    <location>
        <begin position="1"/>
        <end position="327"/>
    </location>
</feature>
<feature type="domain" description="Rhodanese" evidence="1">
    <location>
        <begin position="123"/>
        <end position="217"/>
    </location>
</feature>
<feature type="active site" description="Cysteine persulfide intermediate" evidence="1">
    <location>
        <position position="177"/>
    </location>
</feature>
<name>TRHO_VIBCH</name>
<gene>
    <name evidence="1" type="primary">trhO</name>
    <name type="ordered locus">VC_1259</name>
</gene>
<keyword id="KW-0560">Oxidoreductase</keyword>
<keyword id="KW-1185">Reference proteome</keyword>
<keyword id="KW-0819">tRNA processing</keyword>
<protein>
    <recommendedName>
        <fullName evidence="1">tRNA uridine(34) hydroxylase</fullName>
        <ecNumber evidence="1">1.14.-.-</ecNumber>
    </recommendedName>
    <alternativeName>
        <fullName evidence="1">tRNA hydroxylation protein O</fullName>
    </alternativeName>
</protein>
<organism>
    <name type="scientific">Vibrio cholerae serotype O1 (strain ATCC 39315 / El Tor Inaba N16961)</name>
    <dbReference type="NCBI Taxonomy" id="243277"/>
    <lineage>
        <taxon>Bacteria</taxon>
        <taxon>Pseudomonadati</taxon>
        <taxon>Pseudomonadota</taxon>
        <taxon>Gammaproteobacteria</taxon>
        <taxon>Vibrionales</taxon>
        <taxon>Vibrionaceae</taxon>
        <taxon>Vibrio</taxon>
    </lineage>
</organism>
<accession>Q9KSJ7</accession>
<comment type="function">
    <text evidence="1">Catalyzes oxygen-dependent 5-hydroxyuridine (ho5U) modification at position 34 in tRNAs.</text>
</comment>
<comment type="catalytic activity">
    <reaction evidence="1">
        <text>uridine(34) in tRNA + AH2 + O2 = 5-hydroxyuridine(34) in tRNA + A + H2O</text>
        <dbReference type="Rhea" id="RHEA:64224"/>
        <dbReference type="Rhea" id="RHEA-COMP:11727"/>
        <dbReference type="Rhea" id="RHEA-COMP:13381"/>
        <dbReference type="ChEBI" id="CHEBI:13193"/>
        <dbReference type="ChEBI" id="CHEBI:15377"/>
        <dbReference type="ChEBI" id="CHEBI:15379"/>
        <dbReference type="ChEBI" id="CHEBI:17499"/>
        <dbReference type="ChEBI" id="CHEBI:65315"/>
        <dbReference type="ChEBI" id="CHEBI:136877"/>
    </reaction>
</comment>
<comment type="similarity">
    <text evidence="1">Belongs to the TrhO family.</text>
</comment>
<comment type="sequence caution" evidence="2">
    <conflict type="erroneous initiation">
        <sequence resource="EMBL-CDS" id="AAF94418"/>
    </conflict>
</comment>
<dbReference type="EC" id="1.14.-.-" evidence="1"/>
<dbReference type="EMBL" id="AE003852">
    <property type="protein sequence ID" value="AAF94418.1"/>
    <property type="status" value="ALT_INIT"/>
    <property type="molecule type" value="Genomic_DNA"/>
</dbReference>
<dbReference type="PIR" id="F82221">
    <property type="entry name" value="F82221"/>
</dbReference>
<dbReference type="RefSeq" id="NP_230904.1">
    <property type="nucleotide sequence ID" value="NC_002505.1"/>
</dbReference>
<dbReference type="RefSeq" id="WP_000085170.1">
    <property type="nucleotide sequence ID" value="NZ_LT906614.1"/>
</dbReference>
<dbReference type="SMR" id="Q9KSJ7"/>
<dbReference type="STRING" id="243277.VC_1259"/>
<dbReference type="DNASU" id="2614696"/>
<dbReference type="EnsemblBacteria" id="AAF94418">
    <property type="protein sequence ID" value="AAF94418"/>
    <property type="gene ID" value="VC_1259"/>
</dbReference>
<dbReference type="KEGG" id="vch:VC_1259"/>
<dbReference type="PATRIC" id="fig|243277.26.peg.1198"/>
<dbReference type="eggNOG" id="COG1054">
    <property type="taxonomic scope" value="Bacteria"/>
</dbReference>
<dbReference type="HOGENOM" id="CLU_038878_0_0_6"/>
<dbReference type="Proteomes" id="UP000000584">
    <property type="component" value="Chromosome 1"/>
</dbReference>
<dbReference type="GO" id="GO:0016705">
    <property type="term" value="F:oxidoreductase activity, acting on paired donors, with incorporation or reduction of molecular oxygen"/>
    <property type="evidence" value="ECO:0007669"/>
    <property type="project" value="UniProtKB-UniRule"/>
</dbReference>
<dbReference type="GO" id="GO:0006400">
    <property type="term" value="P:tRNA modification"/>
    <property type="evidence" value="ECO:0007669"/>
    <property type="project" value="UniProtKB-UniRule"/>
</dbReference>
<dbReference type="CDD" id="cd01518">
    <property type="entry name" value="RHOD_YceA"/>
    <property type="match status" value="1"/>
</dbReference>
<dbReference type="Gene3D" id="3.30.70.100">
    <property type="match status" value="1"/>
</dbReference>
<dbReference type="Gene3D" id="3.40.250.10">
    <property type="entry name" value="Rhodanese-like domain"/>
    <property type="match status" value="1"/>
</dbReference>
<dbReference type="HAMAP" id="MF_00469">
    <property type="entry name" value="TrhO"/>
    <property type="match status" value="1"/>
</dbReference>
<dbReference type="InterPro" id="IPR001763">
    <property type="entry name" value="Rhodanese-like_dom"/>
</dbReference>
<dbReference type="InterPro" id="IPR036873">
    <property type="entry name" value="Rhodanese-like_dom_sf"/>
</dbReference>
<dbReference type="InterPro" id="IPR020936">
    <property type="entry name" value="TrhO"/>
</dbReference>
<dbReference type="InterPro" id="IPR040503">
    <property type="entry name" value="TRHO_N"/>
</dbReference>
<dbReference type="NCBIfam" id="NF001136">
    <property type="entry name" value="PRK00142.1-4"/>
    <property type="match status" value="1"/>
</dbReference>
<dbReference type="PANTHER" id="PTHR43268:SF3">
    <property type="entry name" value="RHODANESE-LIKE DOMAIN-CONTAINING PROTEIN 7-RELATED"/>
    <property type="match status" value="1"/>
</dbReference>
<dbReference type="PANTHER" id="PTHR43268">
    <property type="entry name" value="THIOSULFATE SULFURTRANSFERASE/RHODANESE-LIKE DOMAIN-CONTAINING PROTEIN 2"/>
    <property type="match status" value="1"/>
</dbReference>
<dbReference type="Pfam" id="PF00581">
    <property type="entry name" value="Rhodanese"/>
    <property type="match status" value="1"/>
</dbReference>
<dbReference type="Pfam" id="PF17773">
    <property type="entry name" value="UPF0176_N"/>
    <property type="match status" value="1"/>
</dbReference>
<dbReference type="SMART" id="SM00450">
    <property type="entry name" value="RHOD"/>
    <property type="match status" value="1"/>
</dbReference>
<dbReference type="SUPFAM" id="SSF52821">
    <property type="entry name" value="Rhodanese/Cell cycle control phosphatase"/>
    <property type="match status" value="1"/>
</dbReference>
<dbReference type="PROSITE" id="PS50206">
    <property type="entry name" value="RHODANESE_3"/>
    <property type="match status" value="1"/>
</dbReference>